<reference key="1">
    <citation type="journal article" date="2008" name="PLoS ONE">
        <title>Survival in nuclear waste, extreme resistance, and potential applications gleaned from the genome sequence of Kineococcus radiotolerans SRS30216.</title>
        <authorList>
            <person name="Bagwell C.E."/>
            <person name="Bhat S."/>
            <person name="Hawkins G.M."/>
            <person name="Smith B.W."/>
            <person name="Biswas T."/>
            <person name="Hoover T.R."/>
            <person name="Saunders E."/>
            <person name="Han C.S."/>
            <person name="Tsodikov O.V."/>
            <person name="Shimkets L.J."/>
        </authorList>
    </citation>
    <scope>NUCLEOTIDE SEQUENCE [LARGE SCALE GENOMIC DNA]</scope>
    <source>
        <strain>ATCC BAA-149 / DSM 14245 / SRS30216</strain>
    </source>
</reference>
<reference key="2">
    <citation type="journal article" date="2009" name="Biochemistry">
        <title>DNA-dependent ATPase activity of bacterial XPB helicases.</title>
        <authorList>
            <person name="Biswas T."/>
            <person name="Pero J.M."/>
            <person name="Joseph C.G."/>
            <person name="Tsodikov O.V."/>
        </authorList>
    </citation>
    <scope>FUNCTION AS A 3'-5' HELICASE</scope>
    <scope>CATALYTIC ACTIVITY</scope>
    <scope>COFACTOR</scope>
    <scope>BIOPHYSICOCHEMICAL PROPERTIES</scope>
    <scope>SUBUNIT</scope>
    <scope>DOMAIN</scope>
    <scope>DNA-BINDING</scope>
    <source>
        <strain>ATCC BAA-149 / DSM 14245 / SRS30216</strain>
    </source>
</reference>
<feature type="chain" id="PRO_0000455758" description="DNA 3'-5' helicase XPB">
    <location>
        <begin position="1"/>
        <end position="557"/>
    </location>
</feature>
<feature type="domain" description="Helicase ATP-binding" evidence="1">
    <location>
        <begin position="190"/>
        <end position="344"/>
    </location>
</feature>
<feature type="domain" description="Helicase C-terminal" evidence="2">
    <location>
        <begin position="398"/>
        <end position="544"/>
    </location>
</feature>
<feature type="region of interest" description="Required for protein stability or solubility" evidence="3">
    <location>
        <begin position="1"/>
        <end position="135"/>
    </location>
</feature>
<feature type="short sequence motif" description="DEAH box" evidence="1">
    <location>
        <begin position="298"/>
        <end position="301"/>
    </location>
</feature>
<feature type="binding site" evidence="1">
    <location>
        <begin position="203"/>
        <end position="210"/>
    </location>
    <ligand>
        <name>ATP</name>
        <dbReference type="ChEBI" id="CHEBI:30616"/>
    </ligand>
</feature>
<organism>
    <name type="scientific">Kineococcus radiotolerans (strain ATCC BAA-149 / DSM 14245 / SRS30216)</name>
    <dbReference type="NCBI Taxonomy" id="266940"/>
    <lineage>
        <taxon>Bacteria</taxon>
        <taxon>Bacillati</taxon>
        <taxon>Actinomycetota</taxon>
        <taxon>Actinomycetes</taxon>
        <taxon>Kineosporiales</taxon>
        <taxon>Kineosporiaceae</taxon>
        <taxon>Kineococcus</taxon>
    </lineage>
</organism>
<evidence type="ECO:0000255" key="1">
    <source>
        <dbReference type="PROSITE-ProRule" id="PRU00541"/>
    </source>
</evidence>
<evidence type="ECO:0000255" key="2">
    <source>
        <dbReference type="PROSITE-ProRule" id="PRU00542"/>
    </source>
</evidence>
<evidence type="ECO:0000269" key="3">
    <source>
    </source>
</evidence>
<evidence type="ECO:0000303" key="4">
    <source>
    </source>
</evidence>
<evidence type="ECO:0000305" key="5"/>
<evidence type="ECO:0000312" key="6">
    <source>
        <dbReference type="EMBL" id="ABS05075.1"/>
    </source>
</evidence>
<keyword id="KW-0067">ATP-binding</keyword>
<keyword id="KW-0238">DNA-binding</keyword>
<keyword id="KW-0347">Helicase</keyword>
<keyword id="KW-0378">Hydrolase</keyword>
<keyword id="KW-0413">Isomerase</keyword>
<keyword id="KW-0460">Magnesium</keyword>
<keyword id="KW-0464">Manganese</keyword>
<keyword id="KW-0547">Nucleotide-binding</keyword>
<keyword id="KW-1185">Reference proteome</keyword>
<accession>A6WE36</accession>
<sequence length="557" mass="61373">MTDGPLIVQSDKTLLLEVDHPRAGACRAAIAPFAELERAPEHVHTYRLTPLGLWNARAAGHDAEQVVDTLLEFSRYSVPHALLVDVAETMARYGRLQLVKDEEHGLVLRSLDPAVLEEVLRSRKSAPLLGTRIAPDAVLVHPSERGNLKQVLLKLGWPAEDLAGYVDGEAHAIDLAEDGWALRPYQSEAVDNFWNGGSGVVVLPCGAGKTLVGAAAMAKARATTLILVTNTVSARQWRDELLKRTSLTEDEIGEYSGARKEIRPVTIATYQVVTTKRKGVYPHLELFDARDWGLILYDEVHLLPAPIFRMTADLQARRRLGLTATLVREDGREGDVFSLIGPKRYDAPWKDIEAQGYIAPADCVEVRVTLPDAERLAYATAEDDEKYRLCSTSLSKSRVVEKLVAQHAGEPTLVIGQYIDQLDDLAARLDAPVIKGETTVKERQRLFDAFRHGEITTLVVSKVANFSIDLPEAKVAIQVSGSFGSRQEEAQRLGRVLRPKGDHGSARFYTVVSRDTKDQDYAAHRQRFLAEQGYAYRIVDADDIDGGVPDADGVLPG</sequence>
<dbReference type="EC" id="5.6.2.4" evidence="3"/>
<dbReference type="EMBL" id="CP000750">
    <property type="protein sequence ID" value="ABS05075.1"/>
    <property type="molecule type" value="Genomic_DNA"/>
</dbReference>
<dbReference type="RefSeq" id="WP_012086663.1">
    <property type="nucleotide sequence ID" value="NC_009664.2"/>
</dbReference>
<dbReference type="SMR" id="A6WE36"/>
<dbReference type="STRING" id="266940.Krad_3612"/>
<dbReference type="KEGG" id="kra:Krad_3612"/>
<dbReference type="eggNOG" id="COG1061">
    <property type="taxonomic scope" value="Bacteria"/>
</dbReference>
<dbReference type="HOGENOM" id="CLU_008213_4_0_11"/>
<dbReference type="OrthoDB" id="3713880at2"/>
<dbReference type="Proteomes" id="UP000001116">
    <property type="component" value="Chromosome"/>
</dbReference>
<dbReference type="GO" id="GO:0005524">
    <property type="term" value="F:ATP binding"/>
    <property type="evidence" value="ECO:0007669"/>
    <property type="project" value="UniProtKB-KW"/>
</dbReference>
<dbReference type="GO" id="GO:0003677">
    <property type="term" value="F:DNA binding"/>
    <property type="evidence" value="ECO:0007669"/>
    <property type="project" value="UniProtKB-KW"/>
</dbReference>
<dbReference type="GO" id="GO:0004386">
    <property type="term" value="F:helicase activity"/>
    <property type="evidence" value="ECO:0007669"/>
    <property type="project" value="UniProtKB-KW"/>
</dbReference>
<dbReference type="GO" id="GO:0016787">
    <property type="term" value="F:hydrolase activity"/>
    <property type="evidence" value="ECO:0007669"/>
    <property type="project" value="UniProtKB-KW"/>
</dbReference>
<dbReference type="CDD" id="cd18789">
    <property type="entry name" value="SF2_C_XPB"/>
    <property type="match status" value="1"/>
</dbReference>
<dbReference type="Gene3D" id="3.40.50.300">
    <property type="entry name" value="P-loop containing nucleotide triphosphate hydrolases"/>
    <property type="match status" value="2"/>
</dbReference>
<dbReference type="InterPro" id="IPR050615">
    <property type="entry name" value="ATP-dep_DNA_Helicase"/>
</dbReference>
<dbReference type="InterPro" id="IPR032438">
    <property type="entry name" value="ERCC3_RAD25_C"/>
</dbReference>
<dbReference type="InterPro" id="IPR006935">
    <property type="entry name" value="Helicase/UvrB_N"/>
</dbReference>
<dbReference type="InterPro" id="IPR014001">
    <property type="entry name" value="Helicase_ATP-bd"/>
</dbReference>
<dbReference type="InterPro" id="IPR001650">
    <property type="entry name" value="Helicase_C-like"/>
</dbReference>
<dbReference type="InterPro" id="IPR027417">
    <property type="entry name" value="P-loop_NTPase"/>
</dbReference>
<dbReference type="InterPro" id="IPR032830">
    <property type="entry name" value="XPB/Ssl2_N"/>
</dbReference>
<dbReference type="NCBIfam" id="NF045503">
    <property type="entry name" value="repair_heli_XPB"/>
    <property type="match status" value="1"/>
</dbReference>
<dbReference type="PANTHER" id="PTHR11274:SF0">
    <property type="entry name" value="GENERAL TRANSCRIPTION AND DNA REPAIR FACTOR IIH HELICASE SUBUNIT XPB"/>
    <property type="match status" value="1"/>
</dbReference>
<dbReference type="PANTHER" id="PTHR11274">
    <property type="entry name" value="RAD25/XP-B DNA REPAIR HELICASE"/>
    <property type="match status" value="1"/>
</dbReference>
<dbReference type="Pfam" id="PF16203">
    <property type="entry name" value="ERCC3_RAD25_C"/>
    <property type="match status" value="1"/>
</dbReference>
<dbReference type="Pfam" id="PF13625">
    <property type="entry name" value="Helicase_C_3"/>
    <property type="match status" value="1"/>
</dbReference>
<dbReference type="Pfam" id="PF04851">
    <property type="entry name" value="ResIII"/>
    <property type="match status" value="1"/>
</dbReference>
<dbReference type="PRINTS" id="PR00851">
    <property type="entry name" value="XRODRMPGMNTB"/>
</dbReference>
<dbReference type="SMART" id="SM00487">
    <property type="entry name" value="DEXDc"/>
    <property type="match status" value="1"/>
</dbReference>
<dbReference type="SMART" id="SM00490">
    <property type="entry name" value="HELICc"/>
    <property type="match status" value="1"/>
</dbReference>
<dbReference type="SUPFAM" id="SSF52540">
    <property type="entry name" value="P-loop containing nucleoside triphosphate hydrolases"/>
    <property type="match status" value="2"/>
</dbReference>
<dbReference type="PROSITE" id="PS51192">
    <property type="entry name" value="HELICASE_ATP_BIND_1"/>
    <property type="match status" value="1"/>
</dbReference>
<dbReference type="PROSITE" id="PS51194">
    <property type="entry name" value="HELICASE_CTER"/>
    <property type="match status" value="1"/>
</dbReference>
<comment type="function">
    <text evidence="3">ATP-dependent 3'-5' DNA helicase, unwinds 3'-overhangs, 3'- flaps, and splayed-arm DNA substrates but not 5'-overhangs or 5'-flap substrates (PubMed:19199647). Requires ATP hydrolysis for activity; the ATPase activity is DNA-dependent and requires a minimum of 4 single-stranded nucleotides (nt) with 6-10 nt providing all necessary interactions for full processive unwinding (PubMed:19199647). The ATPase prefers ATP over CTP or GTP, is almost inactive with TTP (PubMed:19199647).</text>
</comment>
<comment type="catalytic activity">
    <reaction evidence="3">
        <text>Couples ATP hydrolysis with the unwinding of duplex DNA by translocating in the 3'-5' direction.</text>
        <dbReference type="EC" id="5.6.2.4"/>
    </reaction>
</comment>
<comment type="catalytic activity">
    <reaction evidence="3">
        <text>ATP + H2O = ADP + phosphate + H(+)</text>
        <dbReference type="Rhea" id="RHEA:13065"/>
        <dbReference type="ChEBI" id="CHEBI:15377"/>
        <dbReference type="ChEBI" id="CHEBI:15378"/>
        <dbReference type="ChEBI" id="CHEBI:30616"/>
        <dbReference type="ChEBI" id="CHEBI:43474"/>
        <dbReference type="ChEBI" id="CHEBI:456216"/>
        <dbReference type="EC" id="5.6.2.4"/>
    </reaction>
</comment>
<comment type="cofactor">
    <cofactor evidence="3">
        <name>Mn(2+)</name>
        <dbReference type="ChEBI" id="CHEBI:29035"/>
    </cofactor>
    <cofactor evidence="3">
        <name>Mg(2+)</name>
        <dbReference type="ChEBI" id="CHEBI:18420"/>
    </cofactor>
    <cofactor evidence="3">
        <name>Ca(2+)</name>
        <dbReference type="ChEBI" id="CHEBI:29108"/>
    </cofactor>
    <text evidence="3">ATPase activity has a small preference for Mn(2+) over Mg(2+) or Ca(2+). Co(2+) and Zn(2+) are inactive.</text>
</comment>
<comment type="biophysicochemical properties">
    <kinetics>
        <KM evidence="3">10 uM for 21-mer ssDNA substrate</KM>
        <KM evidence="3">50 uM for 10-mer ssDNA substrate</KM>
    </kinetics>
</comment>
<comment type="subunit">
    <text evidence="3">Monomer.</text>
</comment>
<comment type="domain">
    <text evidence="3">Removal of the N-terminus decreases solubility and/or structural integrity of the protein.</text>
</comment>
<comment type="similarity">
    <text evidence="5">Belongs to the helicase family. RAD25/XPB subfamily.</text>
</comment>
<protein>
    <recommendedName>
        <fullName evidence="4">DNA 3'-5' helicase XPB</fullName>
        <ecNumber evidence="3">5.6.2.4</ecNumber>
    </recommendedName>
</protein>
<name>XPB_KINRD</name>
<gene>
    <name evidence="4" type="primary">XPB</name>
    <name evidence="6" type="ordered locus">Krad_3612</name>
</gene>
<proteinExistence type="evidence at protein level"/>